<comment type="function">
    <text evidence="1">Involved in urease metallocenter assembly. Binds nickel. Probably functions as a nickel donor during metallocenter assembly.</text>
</comment>
<comment type="subcellular location">
    <subcellularLocation>
        <location evidence="1">Cytoplasm</location>
    </subcellularLocation>
</comment>
<comment type="similarity">
    <text evidence="1">Belongs to the UreE family.</text>
</comment>
<dbReference type="EMBL" id="CP000542">
    <property type="protein sequence ID" value="ABM57479.1"/>
    <property type="molecule type" value="Genomic_DNA"/>
</dbReference>
<dbReference type="SMR" id="A1WIM2"/>
<dbReference type="STRING" id="391735.Veis_1725"/>
<dbReference type="KEGG" id="vei:Veis_1725"/>
<dbReference type="eggNOG" id="COG2371">
    <property type="taxonomic scope" value="Bacteria"/>
</dbReference>
<dbReference type="HOGENOM" id="CLU_093757_2_0_4"/>
<dbReference type="OrthoDB" id="5421304at2"/>
<dbReference type="Proteomes" id="UP000000374">
    <property type="component" value="Chromosome"/>
</dbReference>
<dbReference type="GO" id="GO:0005737">
    <property type="term" value="C:cytoplasm"/>
    <property type="evidence" value="ECO:0007669"/>
    <property type="project" value="UniProtKB-SubCell"/>
</dbReference>
<dbReference type="GO" id="GO:0016151">
    <property type="term" value="F:nickel cation binding"/>
    <property type="evidence" value="ECO:0007669"/>
    <property type="project" value="UniProtKB-UniRule"/>
</dbReference>
<dbReference type="GO" id="GO:0051082">
    <property type="term" value="F:unfolded protein binding"/>
    <property type="evidence" value="ECO:0007669"/>
    <property type="project" value="UniProtKB-UniRule"/>
</dbReference>
<dbReference type="GO" id="GO:0006457">
    <property type="term" value="P:protein folding"/>
    <property type="evidence" value="ECO:0007669"/>
    <property type="project" value="InterPro"/>
</dbReference>
<dbReference type="GO" id="GO:0065003">
    <property type="term" value="P:protein-containing complex assembly"/>
    <property type="evidence" value="ECO:0007669"/>
    <property type="project" value="InterPro"/>
</dbReference>
<dbReference type="GO" id="GO:0019627">
    <property type="term" value="P:urea metabolic process"/>
    <property type="evidence" value="ECO:0007669"/>
    <property type="project" value="InterPro"/>
</dbReference>
<dbReference type="CDD" id="cd00571">
    <property type="entry name" value="UreE"/>
    <property type="match status" value="1"/>
</dbReference>
<dbReference type="Gene3D" id="2.60.260.20">
    <property type="entry name" value="Urease metallochaperone UreE, N-terminal domain"/>
    <property type="match status" value="1"/>
</dbReference>
<dbReference type="Gene3D" id="3.30.70.790">
    <property type="entry name" value="UreE, C-terminal domain"/>
    <property type="match status" value="1"/>
</dbReference>
<dbReference type="HAMAP" id="MF_00822">
    <property type="entry name" value="UreE"/>
    <property type="match status" value="1"/>
</dbReference>
<dbReference type="InterPro" id="IPR012406">
    <property type="entry name" value="UreE"/>
</dbReference>
<dbReference type="InterPro" id="IPR007864">
    <property type="entry name" value="UreE_C_dom"/>
</dbReference>
<dbReference type="InterPro" id="IPR004029">
    <property type="entry name" value="UreE_N"/>
</dbReference>
<dbReference type="InterPro" id="IPR036118">
    <property type="entry name" value="UreE_N_sf"/>
</dbReference>
<dbReference type="NCBIfam" id="NF009751">
    <property type="entry name" value="PRK13261.1-1"/>
    <property type="match status" value="1"/>
</dbReference>
<dbReference type="NCBIfam" id="NF009762">
    <property type="entry name" value="PRK13263.1"/>
    <property type="match status" value="1"/>
</dbReference>
<dbReference type="Pfam" id="PF05194">
    <property type="entry name" value="UreE_C"/>
    <property type="match status" value="1"/>
</dbReference>
<dbReference type="Pfam" id="PF02814">
    <property type="entry name" value="UreE_N"/>
    <property type="match status" value="1"/>
</dbReference>
<dbReference type="PIRSF" id="PIRSF036402">
    <property type="entry name" value="Ureas_acces_UreE"/>
    <property type="match status" value="1"/>
</dbReference>
<dbReference type="SMART" id="SM00988">
    <property type="entry name" value="UreE_N"/>
    <property type="match status" value="1"/>
</dbReference>
<dbReference type="SUPFAM" id="SSF69737">
    <property type="entry name" value="Urease metallochaperone UreE, C-terminal domain"/>
    <property type="match status" value="1"/>
</dbReference>
<dbReference type="SUPFAM" id="SSF69287">
    <property type="entry name" value="Urease metallochaperone UreE, N-terminal domain"/>
    <property type="match status" value="1"/>
</dbReference>
<organism>
    <name type="scientific">Verminephrobacter eiseniae (strain EF01-2)</name>
    <dbReference type="NCBI Taxonomy" id="391735"/>
    <lineage>
        <taxon>Bacteria</taxon>
        <taxon>Pseudomonadati</taxon>
        <taxon>Pseudomonadota</taxon>
        <taxon>Betaproteobacteria</taxon>
        <taxon>Burkholderiales</taxon>
        <taxon>Comamonadaceae</taxon>
        <taxon>Verminephrobacter</taxon>
    </lineage>
</organism>
<reference key="1">
    <citation type="submission" date="2006-12" db="EMBL/GenBank/DDBJ databases">
        <title>Complete sequence of chromosome 1 of Verminephrobacter eiseniae EF01-2.</title>
        <authorList>
            <person name="Copeland A."/>
            <person name="Lucas S."/>
            <person name="Lapidus A."/>
            <person name="Barry K."/>
            <person name="Detter J.C."/>
            <person name="Glavina del Rio T."/>
            <person name="Dalin E."/>
            <person name="Tice H."/>
            <person name="Pitluck S."/>
            <person name="Chertkov O."/>
            <person name="Brettin T."/>
            <person name="Bruce D."/>
            <person name="Han C."/>
            <person name="Tapia R."/>
            <person name="Gilna P."/>
            <person name="Schmutz J."/>
            <person name="Larimer F."/>
            <person name="Land M."/>
            <person name="Hauser L."/>
            <person name="Kyrpides N."/>
            <person name="Kim E."/>
            <person name="Stahl D."/>
            <person name="Richardson P."/>
        </authorList>
    </citation>
    <scope>NUCLEOTIDE SEQUENCE [LARGE SCALE GENOMIC DNA]</scope>
    <source>
        <strain>EF01-2</strain>
    </source>
</reference>
<accession>A1WIM2</accession>
<gene>
    <name evidence="1" type="primary">ureE</name>
    <name type="ordered locus">Veis_1725</name>
</gene>
<keyword id="KW-0143">Chaperone</keyword>
<keyword id="KW-0963">Cytoplasm</keyword>
<keyword id="KW-0533">Nickel</keyword>
<keyword id="KW-0996">Nickel insertion</keyword>
<keyword id="KW-1185">Reference proteome</keyword>
<feature type="chain" id="PRO_1000083916" description="Urease accessory protein UreE">
    <location>
        <begin position="1"/>
        <end position="168"/>
    </location>
</feature>
<feature type="region of interest" description="Disordered" evidence="2">
    <location>
        <begin position="145"/>
        <end position="168"/>
    </location>
</feature>
<sequence length="168" mass="18153">MLTVSRLIPRGQGLAPVLRQRASTVELDWELRQKSRLSATDSAGRALGIFLPRGTRLRGGDMLVAEDGSLVRVLATPQPVLLISACPKHGSPFDLTRAAYHLGNRHVPIELQPDHLKIEPDPVLADMLRALHLIVQADNLPFEPEGGAYAAGQGGGHGPHGQHTHPHH</sequence>
<proteinExistence type="inferred from homology"/>
<protein>
    <recommendedName>
        <fullName evidence="1">Urease accessory protein UreE</fullName>
    </recommendedName>
</protein>
<name>UREE_VEREI</name>
<evidence type="ECO:0000255" key="1">
    <source>
        <dbReference type="HAMAP-Rule" id="MF_00822"/>
    </source>
</evidence>
<evidence type="ECO:0000256" key="2">
    <source>
        <dbReference type="SAM" id="MobiDB-lite"/>
    </source>
</evidence>